<keyword id="KW-0007">Acetylation</keyword>
<keyword id="KW-0963">Cytoplasm</keyword>
<keyword id="KW-0343">GTPase activation</keyword>
<keyword id="KW-0597">Phosphoprotein</keyword>
<keyword id="KW-1185">Reference proteome</keyword>
<keyword id="KW-0677">Repeat</keyword>
<keyword id="KW-0727">SH2 domain</keyword>
<keyword id="KW-0728">SH3 domain</keyword>
<gene>
    <name type="primary">Rasa1</name>
    <name type="synonym">Rasa</name>
</gene>
<protein>
    <recommendedName>
        <fullName>Ras GTPase-activating protein 1</fullName>
        <shortName>GAP</shortName>
        <shortName>GTPase-activating protein</shortName>
        <shortName>RasGAP</shortName>
    </recommendedName>
    <alternativeName>
        <fullName>Ras p21 protein activator</fullName>
    </alternativeName>
    <alternativeName>
        <fullName>p120GAP</fullName>
    </alternativeName>
</protein>
<organism>
    <name type="scientific">Rattus norvegicus</name>
    <name type="common">Rat</name>
    <dbReference type="NCBI Taxonomy" id="10116"/>
    <lineage>
        <taxon>Eukaryota</taxon>
        <taxon>Metazoa</taxon>
        <taxon>Chordata</taxon>
        <taxon>Craniata</taxon>
        <taxon>Vertebrata</taxon>
        <taxon>Euteleostomi</taxon>
        <taxon>Mammalia</taxon>
        <taxon>Eutheria</taxon>
        <taxon>Euarchontoglires</taxon>
        <taxon>Glires</taxon>
        <taxon>Rodentia</taxon>
        <taxon>Myomorpha</taxon>
        <taxon>Muroidea</taxon>
        <taxon>Muridae</taxon>
        <taxon>Murinae</taxon>
        <taxon>Rattus</taxon>
    </lineage>
</organism>
<reference key="1">
    <citation type="journal article" date="1993" name="Gene">
        <title>Sequence of the cDNA encoding Ras GTPase-activating protein from rat.</title>
        <authorList>
            <person name="Davis M.M."/>
            <person name="Catino J.J."/>
            <person name="Satoh T."/>
            <person name="Kaziro Y."/>
            <person name="Perkins L.M."/>
        </authorList>
    </citation>
    <scope>NUCLEOTIDE SEQUENCE</scope>
</reference>
<name>RASA1_RAT</name>
<comment type="function">
    <text evidence="1">Inhibitory regulator of the Ras-cyclic AMP pathway. Stimulates the GTPase of normal but not oncogenic Ras p21 (By similarity).</text>
</comment>
<comment type="subunit">
    <text evidence="2">Interacts with SQSTM1. Interacts with SPSB1; the interaction does not promote degradation. Interacts with CAV2 (tyrosine phosphorylated form). Directly interacts with NCK1. Interacts with PDGFRB (tyrosine phosphorylated). Interacts (via SH2 domain) with the 'Tyr-9' phosphorylated form of PDPK1. Interacts with tyrosine-phosphorylated EPHB4.</text>
</comment>
<comment type="interaction">
    <interactant intactId="EBI-5747849">
        <id>P50904</id>
    </interactant>
    <interactant intactId="EBI-517684">
        <id>Q13480</id>
        <label>GAB1</label>
    </interactant>
    <organismsDiffer>true</organismsDiffer>
    <experiments>2</experiments>
</comment>
<comment type="subcellular location">
    <subcellularLocation>
        <location>Cytoplasm</location>
    </subcellularLocation>
</comment>
<comment type="PTM">
    <text evidence="1">Phosphorylated by SRC and LCK. The phosphorylation SRC inhibits its ability to stimulate the Ras-GTPase activity, whereas phosphorylation by LCK does not display any effect on stimulation activity (By similarity).</text>
</comment>
<evidence type="ECO:0000250" key="1"/>
<evidence type="ECO:0000250" key="2">
    <source>
        <dbReference type="UniProtKB" id="P20936"/>
    </source>
</evidence>
<evidence type="ECO:0000255" key="3">
    <source>
        <dbReference type="PROSITE-ProRule" id="PRU00041"/>
    </source>
</evidence>
<evidence type="ECO:0000255" key="4">
    <source>
        <dbReference type="PROSITE-ProRule" id="PRU00145"/>
    </source>
</evidence>
<evidence type="ECO:0000255" key="5">
    <source>
        <dbReference type="PROSITE-ProRule" id="PRU00167"/>
    </source>
</evidence>
<evidence type="ECO:0000255" key="6">
    <source>
        <dbReference type="PROSITE-ProRule" id="PRU00191"/>
    </source>
</evidence>
<evidence type="ECO:0000255" key="7">
    <source>
        <dbReference type="PROSITE-ProRule" id="PRU00192"/>
    </source>
</evidence>
<evidence type="ECO:0000256" key="8">
    <source>
        <dbReference type="SAM" id="MobiDB-lite"/>
    </source>
</evidence>
<sequence>MMAAEAGSEEGGPATAGTGGAAATGSSAYPAACRVKLPAAPPMAVAPCPGLADTDLAAALGGGAASGSGFLGTGPVSGVLGGAALTGGAAAGVAGAAAAGPAGDIALTKGTLSLPAETLGPGGGFPPLPPPPLLPPLGSGLGTVDEGDSLDGPEYEEEEVAIPLTAPPTNQWYHGKLDRTIAEERLRQAGKSGSYLIRESDRRPGSFVLSFLSQTNVVNHFRIIAMCGDYYIGGRRFSSLSDLIGYYSHVSCLLKGEKLLYPVAPPEPVEDRRRVRAILPYTKVPDTDEISFLKGDMFIVHNELEDGWMWVTNLRTDEQGLIVEDLVEEVGREEDPHEGKIWFHGKISKQEAYNLLMTVGQVCSFLVRPSDNTPGDYSLYFRTNENIQRFKICPTPNNQFMMGGRYYNSIGDIIDHYRKEQIVEGYYLKEPVPMQDQGQVLNDTVDGKEIYNTIRRKTKDAFYKNIVKKGYLLKKGKGKRWKNLYFILEGSDAQLIYFESEKRATKPKGLIDLSVCSVYVVHDSLFGRPNCFQIVVQHFSEEHYIFYFAGETPEQAEDWMKGLQAFCSLRKSSPGTSNKRLRQVSSLVLHIEEAHKLPVKHFTNPYCNIYLNSVQVAKTHAREGQNPVWSEEFVFDDLPPDINRFEITLSNKTKKSKDPDILFMRCQLSRLQKGHATDEWFLLSSHIPLKGIEPGSLRVRARYSMEKIMPEEEYSEFKELILQKELHVVYALSHVCGQDRTLLASILLKIFLHEKLESLLLCTLNDREISMEDEATTLFRATTLASTLMEQYMKATATQFVHHALKDSILKIMESKQSCELSPSKLEKNEDVNTNLAHLLSILSELVEKIFMASEILPPTLRYIYGCLQKSVQHKWPTNNTMRTRVVSGFVFLRLICPAILNPRMFNIISDSPSPIAARTLTLVAKSVQNLANLVEFGAKEPYMEGVNPFIKSNKHRMIMFLDELGNVPELPDTTEHSRTDLSRDLAALHEICVAHSDELRTLSNERGVQQHVLKKLLAITELLQQKQNQYTKTNDVR</sequence>
<feature type="chain" id="PRO_0000056637" description="Ras GTPase-activating protein 1">
    <location>
        <begin position="1"/>
        <end position="1038"/>
    </location>
</feature>
<feature type="domain" description="SH2 1" evidence="6">
    <location>
        <begin position="172"/>
        <end position="263"/>
    </location>
</feature>
<feature type="domain" description="SH3" evidence="7">
    <location>
        <begin position="270"/>
        <end position="332"/>
    </location>
</feature>
<feature type="domain" description="SH2 2" evidence="6">
    <location>
        <begin position="342"/>
        <end position="432"/>
    </location>
</feature>
<feature type="domain" description="PH" evidence="4">
    <location>
        <begin position="465"/>
        <end position="568"/>
    </location>
</feature>
<feature type="domain" description="C2" evidence="3">
    <location>
        <begin position="568"/>
        <end position="681"/>
    </location>
</feature>
<feature type="domain" description="Ras-GAP" evidence="5">
    <location>
        <begin position="755"/>
        <end position="965"/>
    </location>
</feature>
<feature type="region of interest" description="Disordered" evidence="8">
    <location>
        <begin position="1"/>
        <end position="24"/>
    </location>
</feature>
<feature type="region of interest" description="Disordered" evidence="8">
    <location>
        <begin position="117"/>
        <end position="152"/>
    </location>
</feature>
<feature type="compositionally biased region" description="Low complexity" evidence="8">
    <location>
        <begin position="1"/>
        <end position="16"/>
    </location>
</feature>
<feature type="compositionally biased region" description="Pro residues" evidence="8">
    <location>
        <begin position="124"/>
        <end position="135"/>
    </location>
</feature>
<feature type="site" description="Arginine finger; crucial for GTP hydrolysis by stabilizing the transition state" evidence="5">
    <location>
        <position position="780"/>
    </location>
</feature>
<feature type="modified residue" description="N-acetylmethionine" evidence="2">
    <location>
        <position position="1"/>
    </location>
</feature>
<feature type="modified residue" description="Phosphotyrosine" evidence="2">
    <location>
        <position position="606"/>
    </location>
</feature>
<feature type="modified residue" description="Phosphoserine" evidence="2">
    <location>
        <position position="822"/>
    </location>
</feature>
<proteinExistence type="evidence at protein level"/>
<dbReference type="EMBL" id="L13151">
    <property type="protein sequence ID" value="AAA16319.1"/>
    <property type="molecule type" value="Unassigned_DNA"/>
</dbReference>
<dbReference type="PIR" id="JT0663">
    <property type="entry name" value="JT0663"/>
</dbReference>
<dbReference type="RefSeq" id="NP_037267.1">
    <property type="nucleotide sequence ID" value="NM_013135.1"/>
</dbReference>
<dbReference type="BMRB" id="P50904"/>
<dbReference type="SMR" id="P50904"/>
<dbReference type="BioGRID" id="247705">
    <property type="interactions" value="3"/>
</dbReference>
<dbReference type="CORUM" id="P50904"/>
<dbReference type="FunCoup" id="P50904">
    <property type="interactions" value="4782"/>
</dbReference>
<dbReference type="IntAct" id="P50904">
    <property type="interactions" value="21"/>
</dbReference>
<dbReference type="MINT" id="P50904"/>
<dbReference type="STRING" id="10116.ENSRNOP00000047300"/>
<dbReference type="iPTMnet" id="P50904"/>
<dbReference type="PhosphoSitePlus" id="P50904"/>
<dbReference type="jPOST" id="P50904"/>
<dbReference type="PaxDb" id="10116-ENSRNOP00000047300"/>
<dbReference type="GeneID" id="25676"/>
<dbReference type="KEGG" id="rno:25676"/>
<dbReference type="UCSC" id="RGD:3537">
    <property type="organism name" value="rat"/>
</dbReference>
<dbReference type="AGR" id="RGD:3537"/>
<dbReference type="CTD" id="5921"/>
<dbReference type="RGD" id="3537">
    <property type="gene designation" value="Rasa1"/>
</dbReference>
<dbReference type="eggNOG" id="KOG3508">
    <property type="taxonomic scope" value="Eukaryota"/>
</dbReference>
<dbReference type="InParanoid" id="P50904"/>
<dbReference type="OrthoDB" id="1562946at2759"/>
<dbReference type="PhylomeDB" id="P50904"/>
<dbReference type="Reactome" id="R-RNO-186763">
    <property type="pathway name" value="Downstream signal transduction"/>
</dbReference>
<dbReference type="Reactome" id="R-RNO-3928662">
    <property type="pathway name" value="EPHB-mediated forward signaling"/>
</dbReference>
<dbReference type="Reactome" id="R-RNO-5218921">
    <property type="pathway name" value="VEGFR2 mediated cell proliferation"/>
</dbReference>
<dbReference type="Reactome" id="R-RNO-5658442">
    <property type="pathway name" value="Regulation of RAS by GAPs"/>
</dbReference>
<dbReference type="Reactome" id="R-RNO-8849471">
    <property type="pathway name" value="PTK6 Regulates RHO GTPases, RAS GTPase and MAP kinases"/>
</dbReference>
<dbReference type="PRO" id="PR:P50904"/>
<dbReference type="Proteomes" id="UP000002494">
    <property type="component" value="Unplaced"/>
</dbReference>
<dbReference type="GO" id="GO:0005737">
    <property type="term" value="C:cytoplasm"/>
    <property type="evidence" value="ECO:0007669"/>
    <property type="project" value="UniProtKB-SubCell"/>
</dbReference>
<dbReference type="GO" id="GO:0031965">
    <property type="term" value="C:nuclear membrane"/>
    <property type="evidence" value="ECO:0000314"/>
    <property type="project" value="RGD"/>
</dbReference>
<dbReference type="GO" id="GO:0005886">
    <property type="term" value="C:plasma membrane"/>
    <property type="evidence" value="ECO:0000266"/>
    <property type="project" value="RGD"/>
</dbReference>
<dbReference type="GO" id="GO:0001726">
    <property type="term" value="C:ruffle"/>
    <property type="evidence" value="ECO:0000266"/>
    <property type="project" value="RGD"/>
</dbReference>
<dbReference type="GO" id="GO:0005096">
    <property type="term" value="F:GTPase activator activity"/>
    <property type="evidence" value="ECO:0000314"/>
    <property type="project" value="RGD"/>
</dbReference>
<dbReference type="GO" id="GO:0051020">
    <property type="term" value="F:GTPase binding"/>
    <property type="evidence" value="ECO:0000266"/>
    <property type="project" value="RGD"/>
</dbReference>
<dbReference type="GO" id="GO:0001784">
    <property type="term" value="F:phosphotyrosine residue binding"/>
    <property type="evidence" value="ECO:0000266"/>
    <property type="project" value="RGD"/>
</dbReference>
<dbReference type="GO" id="GO:0005161">
    <property type="term" value="F:platelet-derived growth factor receptor binding"/>
    <property type="evidence" value="ECO:0000314"/>
    <property type="project" value="RGD"/>
</dbReference>
<dbReference type="GO" id="GO:0043422">
    <property type="term" value="F:protein kinase B binding"/>
    <property type="evidence" value="ECO:0000353"/>
    <property type="project" value="RGD"/>
</dbReference>
<dbReference type="GO" id="GO:1990782">
    <property type="term" value="F:protein tyrosine kinase binding"/>
    <property type="evidence" value="ECO:0000353"/>
    <property type="project" value="RGD"/>
</dbReference>
<dbReference type="GO" id="GO:0044877">
    <property type="term" value="F:protein-containing complex binding"/>
    <property type="evidence" value="ECO:0000314"/>
    <property type="project" value="RGD"/>
</dbReference>
<dbReference type="GO" id="GO:0030971">
    <property type="term" value="F:receptor tyrosine kinase binding"/>
    <property type="evidence" value="ECO:0000353"/>
    <property type="project" value="RGD"/>
</dbReference>
<dbReference type="GO" id="GO:0005102">
    <property type="term" value="F:signaling receptor binding"/>
    <property type="evidence" value="ECO:0000266"/>
    <property type="project" value="RGD"/>
</dbReference>
<dbReference type="GO" id="GO:0044325">
    <property type="term" value="F:transmembrane transporter binding"/>
    <property type="evidence" value="ECO:0000353"/>
    <property type="project" value="RGD"/>
</dbReference>
<dbReference type="GO" id="GO:0030036">
    <property type="term" value="P:actin cytoskeleton organization"/>
    <property type="evidence" value="ECO:0000303"/>
    <property type="project" value="UniProtKB"/>
</dbReference>
<dbReference type="GO" id="GO:0048514">
    <property type="term" value="P:blood vessel morphogenesis"/>
    <property type="evidence" value="ECO:0000266"/>
    <property type="project" value="RGD"/>
</dbReference>
<dbReference type="GO" id="GO:0007155">
    <property type="term" value="P:cell adhesion"/>
    <property type="evidence" value="ECO:0000303"/>
    <property type="project" value="UniProtKB"/>
</dbReference>
<dbReference type="GO" id="GO:0071364">
    <property type="term" value="P:cellular response to epidermal growth factor stimulus"/>
    <property type="evidence" value="ECO:0000314"/>
    <property type="project" value="RGD"/>
</dbReference>
<dbReference type="GO" id="GO:0044344">
    <property type="term" value="P:cellular response to fibroblast growth factor stimulus"/>
    <property type="evidence" value="ECO:0000270"/>
    <property type="project" value="RGD"/>
</dbReference>
<dbReference type="GO" id="GO:0036120">
    <property type="term" value="P:cellular response to platelet-derived growth factor stimulus"/>
    <property type="evidence" value="ECO:0000314"/>
    <property type="project" value="RGD"/>
</dbReference>
<dbReference type="GO" id="GO:0030539">
    <property type="term" value="P:male genitalia development"/>
    <property type="evidence" value="ECO:0000270"/>
    <property type="project" value="RGD"/>
</dbReference>
<dbReference type="GO" id="GO:0000281">
    <property type="term" value="P:mitotic cytokinesis"/>
    <property type="evidence" value="ECO:0000250"/>
    <property type="project" value="UniProtKB"/>
</dbReference>
<dbReference type="GO" id="GO:0043066">
    <property type="term" value="P:negative regulation of apoptotic process"/>
    <property type="evidence" value="ECO:0000250"/>
    <property type="project" value="UniProtKB"/>
</dbReference>
<dbReference type="GO" id="GO:0007162">
    <property type="term" value="P:negative regulation of cell adhesion"/>
    <property type="evidence" value="ECO:0000250"/>
    <property type="project" value="UniProtKB"/>
</dbReference>
<dbReference type="GO" id="GO:0001953">
    <property type="term" value="P:negative regulation of cell-matrix adhesion"/>
    <property type="evidence" value="ECO:0000250"/>
    <property type="project" value="UniProtKB"/>
</dbReference>
<dbReference type="GO" id="GO:0043524">
    <property type="term" value="P:negative regulation of neuron apoptotic process"/>
    <property type="evidence" value="ECO:0000250"/>
    <property type="project" value="UniProtKB"/>
</dbReference>
<dbReference type="GO" id="GO:0046326">
    <property type="term" value="P:positive regulation of D-glucose import"/>
    <property type="evidence" value="ECO:0000315"/>
    <property type="project" value="RGD"/>
</dbReference>
<dbReference type="GO" id="GO:0048146">
    <property type="term" value="P:positive regulation of fibroblast proliferation"/>
    <property type="evidence" value="ECO:0000315"/>
    <property type="project" value="RGD"/>
</dbReference>
<dbReference type="GO" id="GO:0030833">
    <property type="term" value="P:regulation of actin filament polymerization"/>
    <property type="evidence" value="ECO:0000250"/>
    <property type="project" value="UniProtKB"/>
</dbReference>
<dbReference type="GO" id="GO:0032868">
    <property type="term" value="P:response to insulin"/>
    <property type="evidence" value="ECO:0000270"/>
    <property type="project" value="RGD"/>
</dbReference>
<dbReference type="GO" id="GO:0009410">
    <property type="term" value="P:response to xenobiotic stimulus"/>
    <property type="evidence" value="ECO:0000314"/>
    <property type="project" value="RGD"/>
</dbReference>
<dbReference type="GO" id="GO:0007165">
    <property type="term" value="P:signal transduction"/>
    <property type="evidence" value="ECO:0000250"/>
    <property type="project" value="UniProtKB"/>
</dbReference>
<dbReference type="GO" id="GO:0001570">
    <property type="term" value="P:vasculogenesis"/>
    <property type="evidence" value="ECO:0000250"/>
    <property type="project" value="UniProtKB"/>
</dbReference>
<dbReference type="CDD" id="cd08400">
    <property type="entry name" value="C2_Ras_p21A1"/>
    <property type="match status" value="1"/>
</dbReference>
<dbReference type="CDD" id="cd13260">
    <property type="entry name" value="PH_RASA1"/>
    <property type="match status" value="1"/>
</dbReference>
<dbReference type="CDD" id="cd05391">
    <property type="entry name" value="RasGAP_p120GAP"/>
    <property type="match status" value="1"/>
</dbReference>
<dbReference type="CDD" id="cd10354">
    <property type="entry name" value="SH2_Cterm_RasGAP"/>
    <property type="match status" value="1"/>
</dbReference>
<dbReference type="CDD" id="cd10353">
    <property type="entry name" value="SH2_Nterm_RasGAP"/>
    <property type="match status" value="1"/>
</dbReference>
<dbReference type="CDD" id="cd11788">
    <property type="entry name" value="SH3_RasGAP"/>
    <property type="match status" value="1"/>
</dbReference>
<dbReference type="FunFam" id="1.10.506.10:FF:000007">
    <property type="entry name" value="RAS p21 protein activator 1"/>
    <property type="match status" value="1"/>
</dbReference>
<dbReference type="FunFam" id="2.30.29.30:FF:000090">
    <property type="entry name" value="RAS p21 protein activator 1"/>
    <property type="match status" value="1"/>
</dbReference>
<dbReference type="FunFam" id="2.30.30.40:FF:000050">
    <property type="entry name" value="RAS p21 protein activator 1"/>
    <property type="match status" value="1"/>
</dbReference>
<dbReference type="FunFam" id="2.60.40.150:FF:000052">
    <property type="entry name" value="RAS p21 protein activator 1"/>
    <property type="match status" value="1"/>
</dbReference>
<dbReference type="FunFam" id="3.30.505.10:FF:000033">
    <property type="entry name" value="RAS p21 protein activator 1"/>
    <property type="match status" value="1"/>
</dbReference>
<dbReference type="FunFam" id="3.30.505.10:FF:000046">
    <property type="entry name" value="RAS p21 protein activator 1"/>
    <property type="match status" value="1"/>
</dbReference>
<dbReference type="Gene3D" id="2.60.40.150">
    <property type="entry name" value="C2 domain"/>
    <property type="match status" value="1"/>
</dbReference>
<dbReference type="Gene3D" id="1.10.506.10">
    <property type="entry name" value="GTPase Activation - p120gap, domain 1"/>
    <property type="match status" value="2"/>
</dbReference>
<dbReference type="Gene3D" id="2.30.29.30">
    <property type="entry name" value="Pleckstrin-homology domain (PH domain)/Phosphotyrosine-binding domain (PTB)"/>
    <property type="match status" value="1"/>
</dbReference>
<dbReference type="Gene3D" id="3.30.505.10">
    <property type="entry name" value="SH2 domain"/>
    <property type="match status" value="2"/>
</dbReference>
<dbReference type="Gene3D" id="2.30.30.40">
    <property type="entry name" value="SH3 Domains"/>
    <property type="match status" value="1"/>
</dbReference>
<dbReference type="InterPro" id="IPR000008">
    <property type="entry name" value="C2_dom"/>
</dbReference>
<dbReference type="InterPro" id="IPR035892">
    <property type="entry name" value="C2_domain_sf"/>
</dbReference>
<dbReference type="InterPro" id="IPR011993">
    <property type="entry name" value="PH-like_dom_sf"/>
</dbReference>
<dbReference type="InterPro" id="IPR001849">
    <property type="entry name" value="PH_domain"/>
</dbReference>
<dbReference type="InterPro" id="IPR039360">
    <property type="entry name" value="Ras_GTPase"/>
</dbReference>
<dbReference type="InterPro" id="IPR035842">
    <property type="entry name" value="RasGAP_C_SH2"/>
</dbReference>
<dbReference type="InterPro" id="IPR023152">
    <property type="entry name" value="RasGAP_CS"/>
</dbReference>
<dbReference type="InterPro" id="IPR001936">
    <property type="entry name" value="RasGAP_dom"/>
</dbReference>
<dbReference type="InterPro" id="IPR035841">
    <property type="entry name" value="RasGAP_N_SH2"/>
</dbReference>
<dbReference type="InterPro" id="IPR035652">
    <property type="entry name" value="RasGAP_SH3"/>
</dbReference>
<dbReference type="InterPro" id="IPR008936">
    <property type="entry name" value="Rho_GTPase_activation_prot"/>
</dbReference>
<dbReference type="InterPro" id="IPR000980">
    <property type="entry name" value="SH2"/>
</dbReference>
<dbReference type="InterPro" id="IPR036860">
    <property type="entry name" value="SH2_dom_sf"/>
</dbReference>
<dbReference type="InterPro" id="IPR036028">
    <property type="entry name" value="SH3-like_dom_sf"/>
</dbReference>
<dbReference type="InterPro" id="IPR001452">
    <property type="entry name" value="SH3_domain"/>
</dbReference>
<dbReference type="PANTHER" id="PTHR10194:SF146">
    <property type="entry name" value="RAS GTPASE-ACTIVATING PROTEIN 1"/>
    <property type="match status" value="1"/>
</dbReference>
<dbReference type="PANTHER" id="PTHR10194">
    <property type="entry name" value="RAS GTPASE-ACTIVATING PROTEINS"/>
    <property type="match status" value="1"/>
</dbReference>
<dbReference type="Pfam" id="PF00168">
    <property type="entry name" value="C2"/>
    <property type="match status" value="1"/>
</dbReference>
<dbReference type="Pfam" id="PF00169">
    <property type="entry name" value="PH"/>
    <property type="match status" value="1"/>
</dbReference>
<dbReference type="Pfam" id="PF00616">
    <property type="entry name" value="RasGAP"/>
    <property type="match status" value="1"/>
</dbReference>
<dbReference type="Pfam" id="PF00017">
    <property type="entry name" value="SH2"/>
    <property type="match status" value="2"/>
</dbReference>
<dbReference type="Pfam" id="PF00018">
    <property type="entry name" value="SH3_1"/>
    <property type="match status" value="1"/>
</dbReference>
<dbReference type="PRINTS" id="PR00401">
    <property type="entry name" value="SH2DOMAIN"/>
</dbReference>
<dbReference type="SMART" id="SM00239">
    <property type="entry name" value="C2"/>
    <property type="match status" value="1"/>
</dbReference>
<dbReference type="SMART" id="SM00233">
    <property type="entry name" value="PH"/>
    <property type="match status" value="1"/>
</dbReference>
<dbReference type="SMART" id="SM00323">
    <property type="entry name" value="RasGAP"/>
    <property type="match status" value="1"/>
</dbReference>
<dbReference type="SMART" id="SM00252">
    <property type="entry name" value="SH2"/>
    <property type="match status" value="2"/>
</dbReference>
<dbReference type="SMART" id="SM00326">
    <property type="entry name" value="SH3"/>
    <property type="match status" value="1"/>
</dbReference>
<dbReference type="SUPFAM" id="SSF49562">
    <property type="entry name" value="C2 domain (Calcium/lipid-binding domain, CaLB)"/>
    <property type="match status" value="1"/>
</dbReference>
<dbReference type="SUPFAM" id="SSF48350">
    <property type="entry name" value="GTPase activation domain, GAP"/>
    <property type="match status" value="1"/>
</dbReference>
<dbReference type="SUPFAM" id="SSF50729">
    <property type="entry name" value="PH domain-like"/>
    <property type="match status" value="1"/>
</dbReference>
<dbReference type="SUPFAM" id="SSF55550">
    <property type="entry name" value="SH2 domain"/>
    <property type="match status" value="2"/>
</dbReference>
<dbReference type="SUPFAM" id="SSF50044">
    <property type="entry name" value="SH3-domain"/>
    <property type="match status" value="1"/>
</dbReference>
<dbReference type="PROSITE" id="PS50004">
    <property type="entry name" value="C2"/>
    <property type="match status" value="1"/>
</dbReference>
<dbReference type="PROSITE" id="PS50003">
    <property type="entry name" value="PH_DOMAIN"/>
    <property type="match status" value="1"/>
</dbReference>
<dbReference type="PROSITE" id="PS00509">
    <property type="entry name" value="RAS_GTPASE_ACTIV_1"/>
    <property type="match status" value="1"/>
</dbReference>
<dbReference type="PROSITE" id="PS50018">
    <property type="entry name" value="RAS_GTPASE_ACTIV_2"/>
    <property type="match status" value="1"/>
</dbReference>
<dbReference type="PROSITE" id="PS50001">
    <property type="entry name" value="SH2"/>
    <property type="match status" value="2"/>
</dbReference>
<dbReference type="PROSITE" id="PS50002">
    <property type="entry name" value="SH3"/>
    <property type="match status" value="1"/>
</dbReference>
<accession>P50904</accession>